<feature type="chain" id="PRO_0000193242" description="Demethylmenaquinone methyltransferase">
    <location>
        <begin position="1"/>
        <end position="245"/>
    </location>
</feature>
<feature type="binding site" evidence="1">
    <location>
        <position position="58"/>
    </location>
    <ligand>
        <name>S-adenosyl-L-methionine</name>
        <dbReference type="ChEBI" id="CHEBI:59789"/>
    </ligand>
</feature>
<feature type="binding site" evidence="1">
    <location>
        <position position="79"/>
    </location>
    <ligand>
        <name>S-adenosyl-L-methionine</name>
        <dbReference type="ChEBI" id="CHEBI:59789"/>
    </ligand>
</feature>
<feature type="binding site" evidence="1">
    <location>
        <begin position="106"/>
        <end position="107"/>
    </location>
    <ligand>
        <name>S-adenosyl-L-methionine</name>
        <dbReference type="ChEBI" id="CHEBI:59789"/>
    </ligand>
</feature>
<gene>
    <name evidence="1" type="primary">menG</name>
    <name type="ordered locus">BH1649</name>
</gene>
<sequence>MTETKEERVHQVFEKIYKRYDVMNSVISFQRHKAWRKDTMKRMNVQEGQSALDVCCGTADWAIALGKAVGPTGHVEGLDFSENMLSIGKKKIADERLDHVFLRHGNAMELPYADDTFDFVTIGFGLRNVPDYMQVLREMARVTKPGGKVVCLETSQPTIPVFKQLYFFYFRHVMPLFGKMFAKSYDEYSWLQESTLSFPGRDRLAQMFKEVGLTDVQVKPYSGGAAAMHLGVKESYDEESRNVTC</sequence>
<evidence type="ECO:0000255" key="1">
    <source>
        <dbReference type="HAMAP-Rule" id="MF_01813"/>
    </source>
</evidence>
<name>MENG_HALH5</name>
<keyword id="KW-0474">Menaquinone biosynthesis</keyword>
<keyword id="KW-0489">Methyltransferase</keyword>
<keyword id="KW-1185">Reference proteome</keyword>
<keyword id="KW-0949">S-adenosyl-L-methionine</keyword>
<keyword id="KW-0808">Transferase</keyword>
<organism>
    <name type="scientific">Halalkalibacterium halodurans (strain ATCC BAA-125 / DSM 18197 / FERM 7344 / JCM 9153 / C-125)</name>
    <name type="common">Bacillus halodurans</name>
    <dbReference type="NCBI Taxonomy" id="272558"/>
    <lineage>
        <taxon>Bacteria</taxon>
        <taxon>Bacillati</taxon>
        <taxon>Bacillota</taxon>
        <taxon>Bacilli</taxon>
        <taxon>Bacillales</taxon>
        <taxon>Bacillaceae</taxon>
        <taxon>Halalkalibacterium (ex Joshi et al. 2022)</taxon>
    </lineage>
</organism>
<protein>
    <recommendedName>
        <fullName evidence="1">Demethylmenaquinone methyltransferase</fullName>
        <ecNumber evidence="1">2.1.1.163</ecNumber>
    </recommendedName>
</protein>
<proteinExistence type="inferred from homology"/>
<accession>Q9KCC4</accession>
<reference key="1">
    <citation type="journal article" date="2000" name="Nucleic Acids Res.">
        <title>Complete genome sequence of the alkaliphilic bacterium Bacillus halodurans and genomic sequence comparison with Bacillus subtilis.</title>
        <authorList>
            <person name="Takami H."/>
            <person name="Nakasone K."/>
            <person name="Takaki Y."/>
            <person name="Maeno G."/>
            <person name="Sasaki R."/>
            <person name="Masui N."/>
            <person name="Fuji F."/>
            <person name="Hirama C."/>
            <person name="Nakamura Y."/>
            <person name="Ogasawara N."/>
            <person name="Kuhara S."/>
            <person name="Horikoshi K."/>
        </authorList>
    </citation>
    <scope>NUCLEOTIDE SEQUENCE [LARGE SCALE GENOMIC DNA]</scope>
    <source>
        <strain>ATCC BAA-125 / DSM 18197 / FERM 7344 / JCM 9153 / C-125</strain>
    </source>
</reference>
<comment type="function">
    <text evidence="1">Methyltransferase required for the conversion of demethylmenaquinol (DMKH2) to menaquinol (MKH2).</text>
</comment>
<comment type="catalytic activity">
    <reaction evidence="1">
        <text>a 2-demethylmenaquinol + S-adenosyl-L-methionine = a menaquinol + S-adenosyl-L-homocysteine + H(+)</text>
        <dbReference type="Rhea" id="RHEA:42640"/>
        <dbReference type="Rhea" id="RHEA-COMP:9539"/>
        <dbReference type="Rhea" id="RHEA-COMP:9563"/>
        <dbReference type="ChEBI" id="CHEBI:15378"/>
        <dbReference type="ChEBI" id="CHEBI:18151"/>
        <dbReference type="ChEBI" id="CHEBI:55437"/>
        <dbReference type="ChEBI" id="CHEBI:57856"/>
        <dbReference type="ChEBI" id="CHEBI:59789"/>
        <dbReference type="EC" id="2.1.1.163"/>
    </reaction>
</comment>
<comment type="pathway">
    <text evidence="1">Quinol/quinone metabolism; menaquinone biosynthesis; menaquinol from 1,4-dihydroxy-2-naphthoate: step 2/2.</text>
</comment>
<comment type="similarity">
    <text evidence="1">Belongs to the class I-like SAM-binding methyltransferase superfamily. MenG/UbiE family.</text>
</comment>
<dbReference type="EC" id="2.1.1.163" evidence="1"/>
<dbReference type="EMBL" id="BA000004">
    <property type="protein sequence ID" value="BAB05368.1"/>
    <property type="molecule type" value="Genomic_DNA"/>
</dbReference>
<dbReference type="PIR" id="A83856">
    <property type="entry name" value="A83856"/>
</dbReference>
<dbReference type="RefSeq" id="WP_010897811.1">
    <property type="nucleotide sequence ID" value="NC_002570.2"/>
</dbReference>
<dbReference type="SMR" id="Q9KCC4"/>
<dbReference type="STRING" id="272558.gene:10727547"/>
<dbReference type="KEGG" id="bha:BH1649"/>
<dbReference type="eggNOG" id="COG2226">
    <property type="taxonomic scope" value="Bacteria"/>
</dbReference>
<dbReference type="HOGENOM" id="CLU_037990_0_0_9"/>
<dbReference type="OrthoDB" id="9808140at2"/>
<dbReference type="UniPathway" id="UPA00079">
    <property type="reaction ID" value="UER00169"/>
</dbReference>
<dbReference type="Proteomes" id="UP000001258">
    <property type="component" value="Chromosome"/>
</dbReference>
<dbReference type="GO" id="GO:0043770">
    <property type="term" value="F:demethylmenaquinone methyltransferase activity"/>
    <property type="evidence" value="ECO:0007669"/>
    <property type="project" value="UniProtKB-UniRule"/>
</dbReference>
<dbReference type="GO" id="GO:0009234">
    <property type="term" value="P:menaquinone biosynthetic process"/>
    <property type="evidence" value="ECO:0007669"/>
    <property type="project" value="UniProtKB-UniRule"/>
</dbReference>
<dbReference type="GO" id="GO:0032259">
    <property type="term" value="P:methylation"/>
    <property type="evidence" value="ECO:0007669"/>
    <property type="project" value="UniProtKB-KW"/>
</dbReference>
<dbReference type="CDD" id="cd02440">
    <property type="entry name" value="AdoMet_MTases"/>
    <property type="match status" value="1"/>
</dbReference>
<dbReference type="FunFam" id="3.40.50.150:FF:000086">
    <property type="entry name" value="Demethylmenaquinone methyltransferase"/>
    <property type="match status" value="1"/>
</dbReference>
<dbReference type="Gene3D" id="3.40.50.150">
    <property type="entry name" value="Vaccinia Virus protein VP39"/>
    <property type="match status" value="1"/>
</dbReference>
<dbReference type="HAMAP" id="MF_01813">
    <property type="entry name" value="MenG_UbiE_methyltr"/>
    <property type="match status" value="1"/>
</dbReference>
<dbReference type="InterPro" id="IPR014122">
    <property type="entry name" value="MenG_heptapren"/>
</dbReference>
<dbReference type="InterPro" id="IPR029063">
    <property type="entry name" value="SAM-dependent_MTases_sf"/>
</dbReference>
<dbReference type="InterPro" id="IPR004033">
    <property type="entry name" value="UbiE/COQ5_MeTrFase"/>
</dbReference>
<dbReference type="InterPro" id="IPR023576">
    <property type="entry name" value="UbiE/COQ5_MeTrFase_CS"/>
</dbReference>
<dbReference type="NCBIfam" id="TIGR02752">
    <property type="entry name" value="MenG_heptapren"/>
    <property type="match status" value="1"/>
</dbReference>
<dbReference type="NCBIfam" id="TIGR01934">
    <property type="entry name" value="MenG_MenH_UbiE"/>
    <property type="match status" value="1"/>
</dbReference>
<dbReference type="NCBIfam" id="NF001243">
    <property type="entry name" value="PRK00216.1-4"/>
    <property type="match status" value="1"/>
</dbReference>
<dbReference type="NCBIfam" id="NF001244">
    <property type="entry name" value="PRK00216.1-5"/>
    <property type="match status" value="1"/>
</dbReference>
<dbReference type="PANTHER" id="PTHR43591:SF24">
    <property type="entry name" value="2-METHOXY-6-POLYPRENYL-1,4-BENZOQUINOL METHYLASE, MITOCHONDRIAL"/>
    <property type="match status" value="1"/>
</dbReference>
<dbReference type="PANTHER" id="PTHR43591">
    <property type="entry name" value="METHYLTRANSFERASE"/>
    <property type="match status" value="1"/>
</dbReference>
<dbReference type="Pfam" id="PF01209">
    <property type="entry name" value="Ubie_methyltran"/>
    <property type="match status" value="1"/>
</dbReference>
<dbReference type="SUPFAM" id="SSF53335">
    <property type="entry name" value="S-adenosyl-L-methionine-dependent methyltransferases"/>
    <property type="match status" value="1"/>
</dbReference>
<dbReference type="PROSITE" id="PS51608">
    <property type="entry name" value="SAM_MT_UBIE"/>
    <property type="match status" value="1"/>
</dbReference>
<dbReference type="PROSITE" id="PS01183">
    <property type="entry name" value="UBIE_1"/>
    <property type="match status" value="1"/>
</dbReference>
<dbReference type="PROSITE" id="PS01184">
    <property type="entry name" value="UBIE_2"/>
    <property type="match status" value="1"/>
</dbReference>